<feature type="chain" id="PRO_0000079346" description="Curromycin resistance protein">
    <location>
        <begin position="1"/>
        <end position="58"/>
    </location>
</feature>
<feature type="region of interest" description="Disordered" evidence="1">
    <location>
        <begin position="1"/>
        <end position="37"/>
    </location>
</feature>
<feature type="compositionally biased region" description="Low complexity" evidence="1">
    <location>
        <begin position="25"/>
        <end position="37"/>
    </location>
</feature>
<protein>
    <recommendedName>
        <fullName>Curromycin resistance protein</fullName>
    </recommendedName>
</protein>
<sequence>MSVVALGATSITPPHGPESQGRPFPARGPVRPSARARPVPLWTYGYSEGTSRAGRRWG</sequence>
<keyword id="KW-0046">Antibiotic resistance</keyword>
<gene>
    <name type="primary">cre</name>
</gene>
<proteinExistence type="predicted"/>
<name>CRE_STRHY</name>
<accession>P16961</accession>
<reference key="1">
    <citation type="journal article" date="1990" name="J. Antibiot.">
        <title>Molecular cloning and characterization of the gene conferring curromycin resistance on a curromycin non-producing mutant derived from Streptomyces hygroscopicus 358AV2.</title>
        <authorList>
            <person name="Ogura M."/>
            <person name="Takaka T."/>
            <person name="Seto H."/>
            <person name="Otake N."/>
        </authorList>
    </citation>
    <scope>NUCLEOTIDE SEQUENCE [GENOMIC DNA]</scope>
    <source>
        <strain>358AV2</strain>
    </source>
</reference>
<evidence type="ECO:0000256" key="1">
    <source>
        <dbReference type="SAM" id="MobiDB-lite"/>
    </source>
</evidence>
<dbReference type="EMBL" id="M28599">
    <property type="protein sequence ID" value="AAA26721.1"/>
    <property type="molecule type" value="Genomic_DNA"/>
</dbReference>
<dbReference type="PIR" id="A45765">
    <property type="entry name" value="A45765"/>
</dbReference>
<dbReference type="GO" id="GO:0046677">
    <property type="term" value="P:response to antibiotic"/>
    <property type="evidence" value="ECO:0007669"/>
    <property type="project" value="UniProtKB-KW"/>
</dbReference>
<organism>
    <name type="scientific">Streptomyces hygroscopicus</name>
    <dbReference type="NCBI Taxonomy" id="1912"/>
    <lineage>
        <taxon>Bacteria</taxon>
        <taxon>Bacillati</taxon>
        <taxon>Actinomycetota</taxon>
        <taxon>Actinomycetes</taxon>
        <taxon>Kitasatosporales</taxon>
        <taxon>Streptomycetaceae</taxon>
        <taxon>Streptomyces</taxon>
        <taxon>Streptomyces violaceusniger group</taxon>
    </lineage>
</organism>